<gene>
    <name evidence="1" type="primary">ispF</name>
    <name type="ordered locus">DR_0230</name>
</gene>
<protein>
    <recommendedName>
        <fullName evidence="1">2-C-methyl-D-erythritol 2,4-cyclodiphosphate synthase</fullName>
        <shortName evidence="1">MECDP-synthase</shortName>
        <shortName evidence="1">MECPP-synthase</shortName>
        <shortName evidence="1">MECPS</shortName>
        <ecNumber evidence="1">4.6.1.12</ecNumber>
    </recommendedName>
</protein>
<reference key="1">
    <citation type="journal article" date="1999" name="Science">
        <title>Genome sequence of the radioresistant bacterium Deinococcus radiodurans R1.</title>
        <authorList>
            <person name="White O."/>
            <person name="Eisen J.A."/>
            <person name="Heidelberg J.F."/>
            <person name="Hickey E.K."/>
            <person name="Peterson J.D."/>
            <person name="Dodson R.J."/>
            <person name="Haft D.H."/>
            <person name="Gwinn M.L."/>
            <person name="Nelson W.C."/>
            <person name="Richardson D.L."/>
            <person name="Moffat K.S."/>
            <person name="Qin H."/>
            <person name="Jiang L."/>
            <person name="Pamphile W."/>
            <person name="Crosby M."/>
            <person name="Shen M."/>
            <person name="Vamathevan J.J."/>
            <person name="Lam P."/>
            <person name="McDonald L.A."/>
            <person name="Utterback T.R."/>
            <person name="Zalewski C."/>
            <person name="Makarova K.S."/>
            <person name="Aravind L."/>
            <person name="Daly M.J."/>
            <person name="Minton K.W."/>
            <person name="Fleischmann R.D."/>
            <person name="Ketchum K.A."/>
            <person name="Nelson K.E."/>
            <person name="Salzberg S.L."/>
            <person name="Smith H.O."/>
            <person name="Venter J.C."/>
            <person name="Fraser C.M."/>
        </authorList>
    </citation>
    <scope>NUCLEOTIDE SEQUENCE [LARGE SCALE GENOMIC DNA]</scope>
    <source>
        <strain>ATCC 13939 / DSM 20539 / JCM 16871 / CCUG 27074 / LMG 4051 / NBRC 15346 / NCIMB 9279 / VKM B-1422 / R1</strain>
    </source>
</reference>
<accession>Q9RXS6</accession>
<evidence type="ECO:0000255" key="1">
    <source>
        <dbReference type="HAMAP-Rule" id="MF_00107"/>
    </source>
</evidence>
<organism>
    <name type="scientific">Deinococcus radiodurans (strain ATCC 13939 / DSM 20539 / JCM 16871 / CCUG 27074 / LMG 4051 / NBRC 15346 / NCIMB 9279 / VKM B-1422 / R1)</name>
    <dbReference type="NCBI Taxonomy" id="243230"/>
    <lineage>
        <taxon>Bacteria</taxon>
        <taxon>Thermotogati</taxon>
        <taxon>Deinococcota</taxon>
        <taxon>Deinococci</taxon>
        <taxon>Deinococcales</taxon>
        <taxon>Deinococcaceae</taxon>
        <taxon>Deinococcus</taxon>
    </lineage>
</organism>
<proteinExistence type="inferred from homology"/>
<keyword id="KW-0414">Isoprene biosynthesis</keyword>
<keyword id="KW-0456">Lyase</keyword>
<keyword id="KW-0479">Metal-binding</keyword>
<keyword id="KW-1185">Reference proteome</keyword>
<dbReference type="EC" id="4.6.1.12" evidence="1"/>
<dbReference type="EMBL" id="AE000513">
    <property type="protein sequence ID" value="AAF09818.1"/>
    <property type="molecule type" value="Genomic_DNA"/>
</dbReference>
<dbReference type="PIR" id="F75542">
    <property type="entry name" value="F75542"/>
</dbReference>
<dbReference type="RefSeq" id="NP_293954.1">
    <property type="nucleotide sequence ID" value="NC_001263.1"/>
</dbReference>
<dbReference type="RefSeq" id="WP_010886876.1">
    <property type="nucleotide sequence ID" value="NC_001263.1"/>
</dbReference>
<dbReference type="SMR" id="Q9RXS6"/>
<dbReference type="FunCoup" id="Q9RXS6">
    <property type="interactions" value="363"/>
</dbReference>
<dbReference type="STRING" id="243230.DR_0230"/>
<dbReference type="PaxDb" id="243230-DR_0230"/>
<dbReference type="EnsemblBacteria" id="AAF09818">
    <property type="protein sequence ID" value="AAF09818"/>
    <property type="gene ID" value="DR_0230"/>
</dbReference>
<dbReference type="GeneID" id="69516461"/>
<dbReference type="KEGG" id="dra:DR_0230"/>
<dbReference type="PATRIC" id="fig|243230.17.peg.393"/>
<dbReference type="eggNOG" id="COG0245">
    <property type="taxonomic scope" value="Bacteria"/>
</dbReference>
<dbReference type="HOGENOM" id="CLU_084630_2_1_0"/>
<dbReference type="InParanoid" id="Q9RXS6"/>
<dbReference type="OrthoDB" id="9804336at2"/>
<dbReference type="UniPathway" id="UPA00056">
    <property type="reaction ID" value="UER00095"/>
</dbReference>
<dbReference type="Proteomes" id="UP000002524">
    <property type="component" value="Chromosome 1"/>
</dbReference>
<dbReference type="GO" id="GO:0008685">
    <property type="term" value="F:2-C-methyl-D-erythritol 2,4-cyclodiphosphate synthase activity"/>
    <property type="evidence" value="ECO:0000318"/>
    <property type="project" value="GO_Central"/>
</dbReference>
<dbReference type="GO" id="GO:0046872">
    <property type="term" value="F:metal ion binding"/>
    <property type="evidence" value="ECO:0007669"/>
    <property type="project" value="UniProtKB-KW"/>
</dbReference>
<dbReference type="GO" id="GO:0019288">
    <property type="term" value="P:isopentenyl diphosphate biosynthetic process, methylerythritol 4-phosphate pathway"/>
    <property type="evidence" value="ECO:0007669"/>
    <property type="project" value="UniProtKB-UniRule"/>
</dbReference>
<dbReference type="GO" id="GO:0016114">
    <property type="term" value="P:terpenoid biosynthetic process"/>
    <property type="evidence" value="ECO:0007669"/>
    <property type="project" value="InterPro"/>
</dbReference>
<dbReference type="CDD" id="cd00554">
    <property type="entry name" value="MECDP_synthase"/>
    <property type="match status" value="1"/>
</dbReference>
<dbReference type="FunFam" id="3.30.1330.50:FF:000003">
    <property type="entry name" value="2-C-methyl-D-erythritol 2,4-cyclodiphosphate synthase"/>
    <property type="match status" value="1"/>
</dbReference>
<dbReference type="Gene3D" id="3.30.1330.50">
    <property type="entry name" value="2-C-methyl-D-erythritol 2,4-cyclodiphosphate synthase"/>
    <property type="match status" value="1"/>
</dbReference>
<dbReference type="HAMAP" id="MF_00107">
    <property type="entry name" value="IspF"/>
    <property type="match status" value="1"/>
</dbReference>
<dbReference type="InterPro" id="IPR003526">
    <property type="entry name" value="MECDP_synthase"/>
</dbReference>
<dbReference type="InterPro" id="IPR020555">
    <property type="entry name" value="MECDP_synthase_CS"/>
</dbReference>
<dbReference type="InterPro" id="IPR036571">
    <property type="entry name" value="MECDP_synthase_sf"/>
</dbReference>
<dbReference type="NCBIfam" id="TIGR00151">
    <property type="entry name" value="ispF"/>
    <property type="match status" value="1"/>
</dbReference>
<dbReference type="PANTHER" id="PTHR43181">
    <property type="entry name" value="2-C-METHYL-D-ERYTHRITOL 2,4-CYCLODIPHOSPHATE SYNTHASE, CHLOROPLASTIC"/>
    <property type="match status" value="1"/>
</dbReference>
<dbReference type="PANTHER" id="PTHR43181:SF1">
    <property type="entry name" value="2-C-METHYL-D-ERYTHRITOL 2,4-CYCLODIPHOSPHATE SYNTHASE, CHLOROPLASTIC"/>
    <property type="match status" value="1"/>
</dbReference>
<dbReference type="Pfam" id="PF02542">
    <property type="entry name" value="YgbB"/>
    <property type="match status" value="1"/>
</dbReference>
<dbReference type="SUPFAM" id="SSF69765">
    <property type="entry name" value="IpsF-like"/>
    <property type="match status" value="1"/>
</dbReference>
<dbReference type="PROSITE" id="PS01350">
    <property type="entry name" value="ISPF"/>
    <property type="match status" value="1"/>
</dbReference>
<name>ISPF_DEIRA</name>
<sequence length="161" mass="16816">MTGLPFRIGYGEDAHRLAPGLPLVLGGVAIPHAELGAVAHSDGDAVLHAVADALLSGLALGDIGQYFPDTAAEWKGMDSRRILAKALELVEERGYRPVNVALVVTLDRPKLGPLRADIAASVAELLGLPAGEVGVSFKTSEGLALEHVQTRVTVLLGRVDD</sequence>
<feature type="chain" id="PRO_0000189463" description="2-C-methyl-D-erythritol 2,4-cyclodiphosphate synthase">
    <location>
        <begin position="1"/>
        <end position="161"/>
    </location>
</feature>
<feature type="binding site" evidence="1">
    <location>
        <begin position="13"/>
        <end position="15"/>
    </location>
    <ligand>
        <name>4-CDP-2-C-methyl-D-erythritol 2-phosphate</name>
        <dbReference type="ChEBI" id="CHEBI:57919"/>
    </ligand>
</feature>
<feature type="binding site" evidence="1">
    <location>
        <position position="13"/>
    </location>
    <ligand>
        <name>a divalent metal cation</name>
        <dbReference type="ChEBI" id="CHEBI:60240"/>
    </ligand>
</feature>
<feature type="binding site" evidence="1">
    <location>
        <position position="15"/>
    </location>
    <ligand>
        <name>a divalent metal cation</name>
        <dbReference type="ChEBI" id="CHEBI:60240"/>
    </ligand>
</feature>
<feature type="binding site" evidence="1">
    <location>
        <begin position="40"/>
        <end position="41"/>
    </location>
    <ligand>
        <name>4-CDP-2-C-methyl-D-erythritol 2-phosphate</name>
        <dbReference type="ChEBI" id="CHEBI:57919"/>
    </ligand>
</feature>
<feature type="binding site" evidence="1">
    <location>
        <position position="48"/>
    </location>
    <ligand>
        <name>a divalent metal cation</name>
        <dbReference type="ChEBI" id="CHEBI:60240"/>
    </ligand>
</feature>
<feature type="binding site" evidence="1">
    <location>
        <begin position="62"/>
        <end position="64"/>
    </location>
    <ligand>
        <name>4-CDP-2-C-methyl-D-erythritol 2-phosphate</name>
        <dbReference type="ChEBI" id="CHEBI:57919"/>
    </ligand>
</feature>
<feature type="site" description="Transition state stabilizer" evidence="1">
    <location>
        <position position="40"/>
    </location>
</feature>
<feature type="site" description="Transition state stabilizer" evidence="1">
    <location>
        <position position="139"/>
    </location>
</feature>
<comment type="function">
    <text evidence="1">Involved in the biosynthesis of isopentenyl diphosphate (IPP) and dimethylallyl diphosphate (DMAPP), two major building blocks of isoprenoid compounds. Catalyzes the conversion of 4-diphosphocytidyl-2-C-methyl-D-erythritol 2-phosphate (CDP-ME2P) to 2-C-methyl-D-erythritol 2,4-cyclodiphosphate (ME-CPP) with a corresponding release of cytidine 5-monophosphate (CMP).</text>
</comment>
<comment type="catalytic activity">
    <reaction evidence="1">
        <text>4-CDP-2-C-methyl-D-erythritol 2-phosphate = 2-C-methyl-D-erythritol 2,4-cyclic diphosphate + CMP</text>
        <dbReference type="Rhea" id="RHEA:23864"/>
        <dbReference type="ChEBI" id="CHEBI:57919"/>
        <dbReference type="ChEBI" id="CHEBI:58483"/>
        <dbReference type="ChEBI" id="CHEBI:60377"/>
        <dbReference type="EC" id="4.6.1.12"/>
    </reaction>
</comment>
<comment type="cofactor">
    <cofactor evidence="1">
        <name>a divalent metal cation</name>
        <dbReference type="ChEBI" id="CHEBI:60240"/>
    </cofactor>
    <text evidence="1">Binds 1 divalent metal cation per subunit.</text>
</comment>
<comment type="pathway">
    <text evidence="1">Isoprenoid biosynthesis; isopentenyl diphosphate biosynthesis via DXP pathway; isopentenyl diphosphate from 1-deoxy-D-xylulose 5-phosphate: step 4/6.</text>
</comment>
<comment type="subunit">
    <text evidence="1">Homotrimer.</text>
</comment>
<comment type="similarity">
    <text evidence="1">Belongs to the IspF family.</text>
</comment>